<dbReference type="EC" id="3.5.4.25" evidence="1"/>
<dbReference type="EMBL" id="CU928162">
    <property type="protein sequence ID" value="CAR07685.2"/>
    <property type="molecule type" value="Genomic_DNA"/>
</dbReference>
<dbReference type="RefSeq" id="WP_001176294.1">
    <property type="nucleotide sequence ID" value="NC_011745.1"/>
</dbReference>
<dbReference type="SMR" id="B7MUB9"/>
<dbReference type="KEGG" id="ecq:ECED1_1487"/>
<dbReference type="HOGENOM" id="CLU_020273_2_1_6"/>
<dbReference type="UniPathway" id="UPA00275">
    <property type="reaction ID" value="UER00400"/>
</dbReference>
<dbReference type="Proteomes" id="UP000000748">
    <property type="component" value="Chromosome"/>
</dbReference>
<dbReference type="GO" id="GO:0005829">
    <property type="term" value="C:cytosol"/>
    <property type="evidence" value="ECO:0007669"/>
    <property type="project" value="TreeGrafter"/>
</dbReference>
<dbReference type="GO" id="GO:0005525">
    <property type="term" value="F:GTP binding"/>
    <property type="evidence" value="ECO:0007669"/>
    <property type="project" value="UniProtKB-KW"/>
</dbReference>
<dbReference type="GO" id="GO:0003935">
    <property type="term" value="F:GTP cyclohydrolase II activity"/>
    <property type="evidence" value="ECO:0007669"/>
    <property type="project" value="UniProtKB-UniRule"/>
</dbReference>
<dbReference type="GO" id="GO:0008270">
    <property type="term" value="F:zinc ion binding"/>
    <property type="evidence" value="ECO:0007669"/>
    <property type="project" value="UniProtKB-UniRule"/>
</dbReference>
<dbReference type="GO" id="GO:0009231">
    <property type="term" value="P:riboflavin biosynthetic process"/>
    <property type="evidence" value="ECO:0007669"/>
    <property type="project" value="UniProtKB-UniRule"/>
</dbReference>
<dbReference type="CDD" id="cd00641">
    <property type="entry name" value="GTP_cyclohydro2"/>
    <property type="match status" value="1"/>
</dbReference>
<dbReference type="FunFam" id="3.40.50.10990:FF:000002">
    <property type="entry name" value="GTP cyclohydrolase-2"/>
    <property type="match status" value="1"/>
</dbReference>
<dbReference type="Gene3D" id="3.40.50.10990">
    <property type="entry name" value="GTP cyclohydrolase II"/>
    <property type="match status" value="1"/>
</dbReference>
<dbReference type="HAMAP" id="MF_00179">
    <property type="entry name" value="RibA"/>
    <property type="match status" value="1"/>
</dbReference>
<dbReference type="InterPro" id="IPR032677">
    <property type="entry name" value="GTP_cyclohydro_II"/>
</dbReference>
<dbReference type="InterPro" id="IPR000926">
    <property type="entry name" value="RibA"/>
</dbReference>
<dbReference type="InterPro" id="IPR036144">
    <property type="entry name" value="RibA-like_sf"/>
</dbReference>
<dbReference type="NCBIfam" id="NF001591">
    <property type="entry name" value="PRK00393.1"/>
    <property type="match status" value="1"/>
</dbReference>
<dbReference type="NCBIfam" id="TIGR00505">
    <property type="entry name" value="ribA"/>
    <property type="match status" value="1"/>
</dbReference>
<dbReference type="PANTHER" id="PTHR21327:SF18">
    <property type="entry name" value="3,4-DIHYDROXY-2-BUTANONE 4-PHOSPHATE SYNTHASE"/>
    <property type="match status" value="1"/>
</dbReference>
<dbReference type="PANTHER" id="PTHR21327">
    <property type="entry name" value="GTP CYCLOHYDROLASE II-RELATED"/>
    <property type="match status" value="1"/>
</dbReference>
<dbReference type="Pfam" id="PF00925">
    <property type="entry name" value="GTP_cyclohydro2"/>
    <property type="match status" value="1"/>
</dbReference>
<dbReference type="SUPFAM" id="SSF142695">
    <property type="entry name" value="RibA-like"/>
    <property type="match status" value="1"/>
</dbReference>
<reference key="1">
    <citation type="journal article" date="2009" name="PLoS Genet.">
        <title>Organised genome dynamics in the Escherichia coli species results in highly diverse adaptive paths.</title>
        <authorList>
            <person name="Touchon M."/>
            <person name="Hoede C."/>
            <person name="Tenaillon O."/>
            <person name="Barbe V."/>
            <person name="Baeriswyl S."/>
            <person name="Bidet P."/>
            <person name="Bingen E."/>
            <person name="Bonacorsi S."/>
            <person name="Bouchier C."/>
            <person name="Bouvet O."/>
            <person name="Calteau A."/>
            <person name="Chiapello H."/>
            <person name="Clermont O."/>
            <person name="Cruveiller S."/>
            <person name="Danchin A."/>
            <person name="Diard M."/>
            <person name="Dossat C."/>
            <person name="Karoui M.E."/>
            <person name="Frapy E."/>
            <person name="Garry L."/>
            <person name="Ghigo J.M."/>
            <person name="Gilles A.M."/>
            <person name="Johnson J."/>
            <person name="Le Bouguenec C."/>
            <person name="Lescat M."/>
            <person name="Mangenot S."/>
            <person name="Martinez-Jehanne V."/>
            <person name="Matic I."/>
            <person name="Nassif X."/>
            <person name="Oztas S."/>
            <person name="Petit M.A."/>
            <person name="Pichon C."/>
            <person name="Rouy Z."/>
            <person name="Ruf C.S."/>
            <person name="Schneider D."/>
            <person name="Tourret J."/>
            <person name="Vacherie B."/>
            <person name="Vallenet D."/>
            <person name="Medigue C."/>
            <person name="Rocha E.P.C."/>
            <person name="Denamur E."/>
        </authorList>
    </citation>
    <scope>NUCLEOTIDE SEQUENCE [LARGE SCALE GENOMIC DNA]</scope>
    <source>
        <strain>ED1a</strain>
    </source>
</reference>
<name>RIBA_ECO81</name>
<gene>
    <name evidence="1" type="primary">ribA</name>
    <name type="ordered locus">ECED1_1487</name>
</gene>
<keyword id="KW-0342">GTP-binding</keyword>
<keyword id="KW-0378">Hydrolase</keyword>
<keyword id="KW-0479">Metal-binding</keyword>
<keyword id="KW-0547">Nucleotide-binding</keyword>
<keyword id="KW-0686">Riboflavin biosynthesis</keyword>
<keyword id="KW-0862">Zinc</keyword>
<accession>B7MUB9</accession>
<evidence type="ECO:0000255" key="1">
    <source>
        <dbReference type="HAMAP-Rule" id="MF_00179"/>
    </source>
</evidence>
<organism>
    <name type="scientific">Escherichia coli O81 (strain ED1a)</name>
    <dbReference type="NCBI Taxonomy" id="585397"/>
    <lineage>
        <taxon>Bacteria</taxon>
        <taxon>Pseudomonadati</taxon>
        <taxon>Pseudomonadota</taxon>
        <taxon>Gammaproteobacteria</taxon>
        <taxon>Enterobacterales</taxon>
        <taxon>Enterobacteriaceae</taxon>
        <taxon>Escherichia</taxon>
    </lineage>
</organism>
<sequence>MQLKRVAEAKLPTPWGDFLMVGFEELATGHDHVALVYGDISGHTPVLARVHSECLTGDALFSLRCDCGFQLEAALTQIAEEGRGILLYHRQEGRNIGLLNKIRAYALQDQGYDTVEANHQLGFAADERDFTLCADMFKLLGVNEVRLLTNNPKKVEILTEAGINIIERVPLIVGRNPNNEHYLDTKAEKMGHLLNK</sequence>
<feature type="chain" id="PRO_1000193764" description="GTP cyclohydrolase-2">
    <location>
        <begin position="1"/>
        <end position="196"/>
    </location>
</feature>
<feature type="active site" description="Proton acceptor" evidence="1">
    <location>
        <position position="126"/>
    </location>
</feature>
<feature type="active site" description="Nucleophile" evidence="1">
    <location>
        <position position="128"/>
    </location>
</feature>
<feature type="binding site" evidence="1">
    <location>
        <begin position="49"/>
        <end position="53"/>
    </location>
    <ligand>
        <name>GTP</name>
        <dbReference type="ChEBI" id="CHEBI:37565"/>
    </ligand>
</feature>
<feature type="binding site" evidence="1">
    <location>
        <position position="54"/>
    </location>
    <ligand>
        <name>Zn(2+)</name>
        <dbReference type="ChEBI" id="CHEBI:29105"/>
        <note>catalytic</note>
    </ligand>
</feature>
<feature type="binding site" evidence="1">
    <location>
        <position position="65"/>
    </location>
    <ligand>
        <name>Zn(2+)</name>
        <dbReference type="ChEBI" id="CHEBI:29105"/>
        <note>catalytic</note>
    </ligand>
</feature>
<feature type="binding site" evidence="1">
    <location>
        <position position="67"/>
    </location>
    <ligand>
        <name>Zn(2+)</name>
        <dbReference type="ChEBI" id="CHEBI:29105"/>
        <note>catalytic</note>
    </ligand>
</feature>
<feature type="binding site" evidence="1">
    <location>
        <position position="70"/>
    </location>
    <ligand>
        <name>GTP</name>
        <dbReference type="ChEBI" id="CHEBI:37565"/>
    </ligand>
</feature>
<feature type="binding site" evidence="1">
    <location>
        <begin position="92"/>
        <end position="94"/>
    </location>
    <ligand>
        <name>GTP</name>
        <dbReference type="ChEBI" id="CHEBI:37565"/>
    </ligand>
</feature>
<feature type="binding site" evidence="1">
    <location>
        <position position="114"/>
    </location>
    <ligand>
        <name>GTP</name>
        <dbReference type="ChEBI" id="CHEBI:37565"/>
    </ligand>
</feature>
<feature type="binding site" evidence="1">
    <location>
        <position position="149"/>
    </location>
    <ligand>
        <name>GTP</name>
        <dbReference type="ChEBI" id="CHEBI:37565"/>
    </ligand>
</feature>
<feature type="binding site" evidence="1">
    <location>
        <position position="154"/>
    </location>
    <ligand>
        <name>GTP</name>
        <dbReference type="ChEBI" id="CHEBI:37565"/>
    </ligand>
</feature>
<proteinExistence type="inferred from homology"/>
<comment type="function">
    <text evidence="1">Catalyzes the conversion of GTP to 2,5-diamino-6-ribosylamino-4(3H)-pyrimidinone 5'-phosphate (DARP), formate and pyrophosphate.</text>
</comment>
<comment type="catalytic activity">
    <reaction evidence="1">
        <text>GTP + 4 H2O = 2,5-diamino-6-hydroxy-4-(5-phosphoribosylamino)-pyrimidine + formate + 2 phosphate + 3 H(+)</text>
        <dbReference type="Rhea" id="RHEA:23704"/>
        <dbReference type="ChEBI" id="CHEBI:15377"/>
        <dbReference type="ChEBI" id="CHEBI:15378"/>
        <dbReference type="ChEBI" id="CHEBI:15740"/>
        <dbReference type="ChEBI" id="CHEBI:37565"/>
        <dbReference type="ChEBI" id="CHEBI:43474"/>
        <dbReference type="ChEBI" id="CHEBI:58614"/>
        <dbReference type="EC" id="3.5.4.25"/>
    </reaction>
</comment>
<comment type="cofactor">
    <cofactor evidence="1">
        <name>Zn(2+)</name>
        <dbReference type="ChEBI" id="CHEBI:29105"/>
    </cofactor>
    <text evidence="1">Binds 1 zinc ion per subunit.</text>
</comment>
<comment type="pathway">
    <text evidence="1">Cofactor biosynthesis; riboflavin biosynthesis; 5-amino-6-(D-ribitylamino)uracil from GTP: step 1/4.</text>
</comment>
<comment type="subunit">
    <text evidence="1">Homodimer.</text>
</comment>
<comment type="similarity">
    <text evidence="1">Belongs to the GTP cyclohydrolase II family.</text>
</comment>
<protein>
    <recommendedName>
        <fullName evidence="1">GTP cyclohydrolase-2</fullName>
        <ecNumber evidence="1">3.5.4.25</ecNumber>
    </recommendedName>
    <alternativeName>
        <fullName evidence="1">GTP cyclohydrolase II</fullName>
    </alternativeName>
</protein>